<proteinExistence type="inferred from homology"/>
<protein>
    <recommendedName>
        <fullName evidence="1">Peptide chain release factor 1</fullName>
        <shortName evidence="1">RF-1</shortName>
    </recommendedName>
</protein>
<organism>
    <name type="scientific">Mycobacterium sp. (strain JLS)</name>
    <dbReference type="NCBI Taxonomy" id="164757"/>
    <lineage>
        <taxon>Bacteria</taxon>
        <taxon>Bacillati</taxon>
        <taxon>Actinomycetota</taxon>
        <taxon>Actinomycetes</taxon>
        <taxon>Mycobacteriales</taxon>
        <taxon>Mycobacteriaceae</taxon>
        <taxon>Mycobacterium</taxon>
    </lineage>
</organism>
<evidence type="ECO:0000255" key="1">
    <source>
        <dbReference type="HAMAP-Rule" id="MF_00093"/>
    </source>
</evidence>
<feature type="chain" id="PRO_1000004915" description="Peptide chain release factor 1">
    <location>
        <begin position="1"/>
        <end position="357"/>
    </location>
</feature>
<feature type="modified residue" description="N5-methylglutamine" evidence="1">
    <location>
        <position position="236"/>
    </location>
</feature>
<dbReference type="EMBL" id="CP000580">
    <property type="protein sequence ID" value="ABN99649.1"/>
    <property type="molecule type" value="Genomic_DNA"/>
</dbReference>
<dbReference type="SMR" id="A3Q3C2"/>
<dbReference type="KEGG" id="mjl:Mjls_3873"/>
<dbReference type="HOGENOM" id="CLU_036856_0_6_11"/>
<dbReference type="BioCyc" id="MSP164757:G1G8C-3913-MONOMER"/>
<dbReference type="GO" id="GO:0005737">
    <property type="term" value="C:cytoplasm"/>
    <property type="evidence" value="ECO:0007669"/>
    <property type="project" value="UniProtKB-SubCell"/>
</dbReference>
<dbReference type="GO" id="GO:0016149">
    <property type="term" value="F:translation release factor activity, codon specific"/>
    <property type="evidence" value="ECO:0007669"/>
    <property type="project" value="UniProtKB-UniRule"/>
</dbReference>
<dbReference type="FunFam" id="3.30.160.20:FF:000004">
    <property type="entry name" value="Peptide chain release factor 1"/>
    <property type="match status" value="1"/>
</dbReference>
<dbReference type="Gene3D" id="3.30.160.20">
    <property type="match status" value="1"/>
</dbReference>
<dbReference type="Gene3D" id="3.30.70.1660">
    <property type="match status" value="1"/>
</dbReference>
<dbReference type="Gene3D" id="6.10.140.1950">
    <property type="match status" value="1"/>
</dbReference>
<dbReference type="HAMAP" id="MF_00093">
    <property type="entry name" value="Rel_fac_1"/>
    <property type="match status" value="1"/>
</dbReference>
<dbReference type="InterPro" id="IPR005139">
    <property type="entry name" value="PCRF"/>
</dbReference>
<dbReference type="InterPro" id="IPR000352">
    <property type="entry name" value="Pep_chain_release_fac_I"/>
</dbReference>
<dbReference type="InterPro" id="IPR045853">
    <property type="entry name" value="Pep_chain_release_fac_I_sf"/>
</dbReference>
<dbReference type="InterPro" id="IPR050057">
    <property type="entry name" value="Prokaryotic/Mito_RF"/>
</dbReference>
<dbReference type="InterPro" id="IPR004373">
    <property type="entry name" value="RF-1"/>
</dbReference>
<dbReference type="NCBIfam" id="TIGR00019">
    <property type="entry name" value="prfA"/>
    <property type="match status" value="1"/>
</dbReference>
<dbReference type="NCBIfam" id="NF001859">
    <property type="entry name" value="PRK00591.1"/>
    <property type="match status" value="1"/>
</dbReference>
<dbReference type="PANTHER" id="PTHR43804">
    <property type="entry name" value="LD18447P"/>
    <property type="match status" value="1"/>
</dbReference>
<dbReference type="PANTHER" id="PTHR43804:SF7">
    <property type="entry name" value="LD18447P"/>
    <property type="match status" value="1"/>
</dbReference>
<dbReference type="Pfam" id="PF03462">
    <property type="entry name" value="PCRF"/>
    <property type="match status" value="1"/>
</dbReference>
<dbReference type="Pfam" id="PF00472">
    <property type="entry name" value="RF-1"/>
    <property type="match status" value="1"/>
</dbReference>
<dbReference type="SMART" id="SM00937">
    <property type="entry name" value="PCRF"/>
    <property type="match status" value="1"/>
</dbReference>
<dbReference type="SUPFAM" id="SSF75620">
    <property type="entry name" value="Release factor"/>
    <property type="match status" value="1"/>
</dbReference>
<dbReference type="PROSITE" id="PS00745">
    <property type="entry name" value="RF_PROK_I"/>
    <property type="match status" value="1"/>
</dbReference>
<accession>A3Q3C2</accession>
<sequence>MSAPTTAIDALLAEHADLERQLADPALHADAGKARKAGRRFAQLAPIVATYRKLEAARGDLEAARELGADDASFAAEVPELEATVDQLETQLSDLLAPRDPHDADDIVLEVKSGEGGEESALFAADLARMYIRYAERHGWSVTILDETTSDLGGYKDATLSIRSKGDSADGVWSRLKFEGGVHRVQRVPVTESQGRVHTSAAGVLVYPEPEEVEQVQIDESDLRIDVYRSSGKGGQGVNTTDSAVRITHLPTGIVVTCQNERSQLQNKARAMQVLAARLQSLAEEQASADASADRASQIRTVDRSERIRTYNFPENRIADHRINFKAHNLDQVLDGDLDPLFDALAAADKQARLQSS</sequence>
<keyword id="KW-0963">Cytoplasm</keyword>
<keyword id="KW-0488">Methylation</keyword>
<keyword id="KW-0648">Protein biosynthesis</keyword>
<name>RF1_MYCSJ</name>
<comment type="function">
    <text evidence="1">Peptide chain release factor 1 directs the termination of translation in response to the peptide chain termination codons UAG and UAA.</text>
</comment>
<comment type="subcellular location">
    <subcellularLocation>
        <location evidence="1">Cytoplasm</location>
    </subcellularLocation>
</comment>
<comment type="PTM">
    <text evidence="1">Methylated by PrmC. Methylation increases the termination efficiency of RF1.</text>
</comment>
<comment type="similarity">
    <text evidence="1">Belongs to the prokaryotic/mitochondrial release factor family.</text>
</comment>
<reference key="1">
    <citation type="submission" date="2007-02" db="EMBL/GenBank/DDBJ databases">
        <title>Complete sequence of Mycobacterium sp. JLS.</title>
        <authorList>
            <consortium name="US DOE Joint Genome Institute"/>
            <person name="Copeland A."/>
            <person name="Lucas S."/>
            <person name="Lapidus A."/>
            <person name="Barry K."/>
            <person name="Detter J.C."/>
            <person name="Glavina del Rio T."/>
            <person name="Hammon N."/>
            <person name="Israni S."/>
            <person name="Dalin E."/>
            <person name="Tice H."/>
            <person name="Pitluck S."/>
            <person name="Chain P."/>
            <person name="Malfatti S."/>
            <person name="Shin M."/>
            <person name="Vergez L."/>
            <person name="Schmutz J."/>
            <person name="Larimer F."/>
            <person name="Land M."/>
            <person name="Hauser L."/>
            <person name="Kyrpides N."/>
            <person name="Mikhailova N."/>
            <person name="Miller C.D."/>
            <person name="Anderson A.J."/>
            <person name="Sims R.C."/>
            <person name="Richardson P."/>
        </authorList>
    </citation>
    <scope>NUCLEOTIDE SEQUENCE [LARGE SCALE GENOMIC DNA]</scope>
    <source>
        <strain>JLS</strain>
    </source>
</reference>
<gene>
    <name evidence="1" type="primary">prfA</name>
    <name type="ordered locus">Mjls_3873</name>
</gene>